<dbReference type="EC" id="3.4.19.12" evidence="2"/>
<dbReference type="EMBL" id="AB125199">
    <property type="protein sequence ID" value="BAD51987.1"/>
    <property type="molecule type" value="mRNA"/>
</dbReference>
<dbReference type="BMRB" id="Q60HC8"/>
<dbReference type="SMR" id="Q60HC8"/>
<dbReference type="STRING" id="9541.ENSMFAP00000016422"/>
<dbReference type="MEROPS" id="C12.001"/>
<dbReference type="eggNOG" id="KOG1415">
    <property type="taxonomic scope" value="Eukaryota"/>
</dbReference>
<dbReference type="BRENDA" id="3.4.19.12">
    <property type="organism ID" value="1793"/>
</dbReference>
<dbReference type="Proteomes" id="UP000233100">
    <property type="component" value="Unplaced"/>
</dbReference>
<dbReference type="GO" id="GO:0005789">
    <property type="term" value="C:endoplasmic reticulum membrane"/>
    <property type="evidence" value="ECO:0007669"/>
    <property type="project" value="UniProtKB-SubCell"/>
</dbReference>
<dbReference type="GO" id="GO:0005634">
    <property type="term" value="C:nucleus"/>
    <property type="evidence" value="ECO:0007669"/>
    <property type="project" value="UniProtKB-SubCell"/>
</dbReference>
<dbReference type="GO" id="GO:0004843">
    <property type="term" value="F:cysteine-type deubiquitinase activity"/>
    <property type="evidence" value="ECO:0007669"/>
    <property type="project" value="UniProtKB-EC"/>
</dbReference>
<dbReference type="GO" id="GO:0016579">
    <property type="term" value="P:protein deubiquitination"/>
    <property type="evidence" value="ECO:0007669"/>
    <property type="project" value="TreeGrafter"/>
</dbReference>
<dbReference type="GO" id="GO:0006511">
    <property type="term" value="P:ubiquitin-dependent protein catabolic process"/>
    <property type="evidence" value="ECO:0007669"/>
    <property type="project" value="InterPro"/>
</dbReference>
<dbReference type="CDD" id="cd09616">
    <property type="entry name" value="Peptidase_C12_UCH_L1_L3"/>
    <property type="match status" value="1"/>
</dbReference>
<dbReference type="FunFam" id="3.40.532.10:FF:000004">
    <property type="entry name" value="Ubiquitin carboxyl-terminal hydrolase"/>
    <property type="match status" value="1"/>
</dbReference>
<dbReference type="Gene3D" id="3.40.532.10">
    <property type="entry name" value="Peptidase C12, ubiquitin carboxyl-terminal hydrolase"/>
    <property type="match status" value="1"/>
</dbReference>
<dbReference type="InterPro" id="IPR038765">
    <property type="entry name" value="Papain-like_cys_pep_sf"/>
</dbReference>
<dbReference type="InterPro" id="IPR001578">
    <property type="entry name" value="Peptidase_C12_UCH"/>
</dbReference>
<dbReference type="InterPro" id="IPR036959">
    <property type="entry name" value="Peptidase_C12_UCH_sf"/>
</dbReference>
<dbReference type="InterPro" id="IPR057254">
    <property type="entry name" value="UCH_AS"/>
</dbReference>
<dbReference type="PANTHER" id="PTHR10589">
    <property type="entry name" value="UBIQUITIN CARBOXYL-TERMINAL HYDROLASE"/>
    <property type="match status" value="1"/>
</dbReference>
<dbReference type="PANTHER" id="PTHR10589:SF19">
    <property type="entry name" value="UBIQUITIN CARBOXYL-TERMINAL HYDROLASE ISOZYME L1"/>
    <property type="match status" value="1"/>
</dbReference>
<dbReference type="Pfam" id="PF01088">
    <property type="entry name" value="Peptidase_C12"/>
    <property type="match status" value="1"/>
</dbReference>
<dbReference type="PRINTS" id="PR00707">
    <property type="entry name" value="UBCTHYDRLASE"/>
</dbReference>
<dbReference type="SUPFAM" id="SSF54001">
    <property type="entry name" value="Cysteine proteinases"/>
    <property type="match status" value="1"/>
</dbReference>
<dbReference type="PROSITE" id="PS00140">
    <property type="entry name" value="UCH_1"/>
    <property type="match status" value="1"/>
</dbReference>
<dbReference type="PROSITE" id="PS52048">
    <property type="entry name" value="UCH_DOMAIN"/>
    <property type="match status" value="1"/>
</dbReference>
<accession>Q60HC8</accession>
<comment type="function">
    <text evidence="2 4">Ubiquitin-protein hydrolase involved both in the processing of ubiquitin precursors and of ubiquitinated proteins. This enzyme is a thiol protease that recognizes and hydrolyzes a peptide bond at the C-terminal glycine of ubiquitin (By similarity). Also binds to free monoubiquitin and may prevent its degradation in lysosomes (By similarity). The homodimer may have ATP-independent ubiquitin ligase activity (By similarity).</text>
</comment>
<comment type="catalytic activity">
    <reaction evidence="2">
        <text>Thiol-dependent hydrolysis of ester, thioester, amide, peptide and isopeptide bonds formed by the C-terminal Gly of ubiquitin (a 76-residue protein attached to proteins as an intracellular targeting signal).</text>
        <dbReference type="EC" id="3.4.19.12"/>
    </reaction>
</comment>
<comment type="subunit">
    <text evidence="1">Monomer. Homodimer. Interacts with COPS5 and SNCA (By similarity).</text>
</comment>
<comment type="subcellular location">
    <subcellularLocation>
        <location evidence="1">Cytoplasm</location>
    </subcellularLocation>
    <subcellularLocation>
        <location evidence="1">Endoplasmic reticulum membrane</location>
        <topology evidence="1">Lipid-anchor</topology>
    </subcellularLocation>
    <subcellularLocation>
        <location evidence="1">Nucleus</location>
    </subcellularLocation>
    <text evidence="7">Found both cytoplasmic and nuclear in cytotrophoblasts and decidual cells.</text>
</comment>
<comment type="tissue specificity">
    <text evidence="7">Expressed in the placenta at all stages of pregnancy. Expression increases as pregnancy progresses.</text>
</comment>
<comment type="PTM">
    <text evidence="1">O-glycosylated.</text>
</comment>
<comment type="miscellaneous">
    <text evidence="1">In contrast to UCHL3, does not hydrolyze a peptide bond at the C-terminal glycine of NEDD8.</text>
</comment>
<comment type="similarity">
    <text evidence="8">Belongs to the peptidase C12 family.</text>
</comment>
<comment type="caution">
    <text evidence="2">The homodimer may have ATP-independent ubiquitin ligase activity. However, in another study, UCHL1 was shown to lack ubiquitin ligase activity.</text>
</comment>
<evidence type="ECO:0000250" key="1"/>
<evidence type="ECO:0000250" key="2">
    <source>
        <dbReference type="UniProtKB" id="P09936"/>
    </source>
</evidence>
<evidence type="ECO:0000250" key="3">
    <source>
        <dbReference type="UniProtKB" id="Q00981"/>
    </source>
</evidence>
<evidence type="ECO:0000250" key="4">
    <source>
        <dbReference type="UniProtKB" id="Q9R0P9"/>
    </source>
</evidence>
<evidence type="ECO:0000255" key="5">
    <source>
        <dbReference type="PROSITE-ProRule" id="PRU01393"/>
    </source>
</evidence>
<evidence type="ECO:0000255" key="6">
    <source>
        <dbReference type="PROSITE-ProRule" id="PRU10091"/>
    </source>
</evidence>
<evidence type="ECO:0000269" key="7">
    <source>
    </source>
</evidence>
<evidence type="ECO:0000305" key="8"/>
<feature type="chain" id="PRO_0000211056" description="Ubiquitin carboxyl-terminal hydrolase isozyme L1">
    <location>
        <begin position="1"/>
        <end position="220"/>
    </location>
</feature>
<feature type="propeptide" id="PRO_0000414312" description="Removed in mature form" evidence="1">
    <location>
        <begin position="221"/>
        <end position="223"/>
    </location>
</feature>
<feature type="domain" description="UCH catalytic" evidence="5">
    <location>
        <begin position="2"/>
        <end position="221"/>
    </location>
</feature>
<feature type="region of interest" description="Interaction with ubiquitin" evidence="2">
    <location>
        <begin position="5"/>
        <end position="10"/>
    </location>
</feature>
<feature type="region of interest" description="Interaction with ubiquitin" evidence="2">
    <location>
        <begin position="211"/>
        <end position="216"/>
    </location>
</feature>
<feature type="active site" description="Nucleophile" evidence="5 6">
    <location>
        <position position="90"/>
    </location>
</feature>
<feature type="active site" description="Proton donor" evidence="5">
    <location>
        <position position="161"/>
    </location>
</feature>
<feature type="site" description="Transition state stabilizer" evidence="5">
    <location>
        <position position="84"/>
    </location>
</feature>
<feature type="site" description="Important for enzyme activity" evidence="5">
    <location>
        <position position="176"/>
    </location>
</feature>
<feature type="modified residue" description="N-acetylmethionine" evidence="2">
    <location>
        <position position="1"/>
    </location>
</feature>
<feature type="modified residue" description="Phosphoserine" evidence="3">
    <location>
        <position position="125"/>
    </location>
</feature>
<feature type="lipid moiety-binding region" description="S-farnesyl cysteine" evidence="2">
    <location>
        <position position="220"/>
    </location>
</feature>
<protein>
    <recommendedName>
        <fullName>Ubiquitin carboxyl-terminal hydrolase isozyme L1</fullName>
        <shortName>UCH-L1</shortName>
        <ecNumber evidence="2">3.4.19.12</ecNumber>
    </recommendedName>
    <alternativeName>
        <fullName>Ubiquitin thioesterase L1</fullName>
    </alternativeName>
</protein>
<keyword id="KW-0007">Acetylation</keyword>
<keyword id="KW-0963">Cytoplasm</keyword>
<keyword id="KW-0256">Endoplasmic reticulum</keyword>
<keyword id="KW-0325">Glycoprotein</keyword>
<keyword id="KW-0378">Hydrolase</keyword>
<keyword id="KW-0449">Lipoprotein</keyword>
<keyword id="KW-0472">Membrane</keyword>
<keyword id="KW-0539">Nucleus</keyword>
<keyword id="KW-0597">Phosphoprotein</keyword>
<keyword id="KW-0636">Prenylation</keyword>
<keyword id="KW-0645">Protease</keyword>
<keyword id="KW-1185">Reference proteome</keyword>
<keyword id="KW-0788">Thiol protease</keyword>
<keyword id="KW-0833">Ubl conjugation pathway</keyword>
<gene>
    <name type="primary">UCHL1</name>
    <name type="ORF">QccE-15749</name>
</gene>
<organism>
    <name type="scientific">Macaca fascicularis</name>
    <name type="common">Crab-eating macaque</name>
    <name type="synonym">Cynomolgus monkey</name>
    <dbReference type="NCBI Taxonomy" id="9541"/>
    <lineage>
        <taxon>Eukaryota</taxon>
        <taxon>Metazoa</taxon>
        <taxon>Chordata</taxon>
        <taxon>Craniata</taxon>
        <taxon>Vertebrata</taxon>
        <taxon>Euteleostomi</taxon>
        <taxon>Mammalia</taxon>
        <taxon>Eutheria</taxon>
        <taxon>Euarchontoglires</taxon>
        <taxon>Primates</taxon>
        <taxon>Haplorrhini</taxon>
        <taxon>Catarrhini</taxon>
        <taxon>Cercopithecidae</taxon>
        <taxon>Cercopithecinae</taxon>
        <taxon>Macaca</taxon>
    </lineage>
</organism>
<reference key="1">
    <citation type="submission" date="2003-10" db="EMBL/GenBank/DDBJ databases">
        <title>Isolation and characterization of cDNA for macaque neurological disease genes.</title>
        <authorList>
            <person name="Kusuda J."/>
            <person name="Osada N."/>
            <person name="Tanuma R."/>
            <person name="Hirata M."/>
            <person name="Sugano S."/>
            <person name="Hashimoto K."/>
        </authorList>
    </citation>
    <scope>NUCLEOTIDE SEQUENCE [LARGE SCALE MRNA]</scope>
    <source>
        <tissue>Brain cortex</tissue>
    </source>
</reference>
<reference key="2">
    <citation type="journal article" date="2005" name="Placenta">
        <title>Localization of ubiquitin carboxyl-terminal hydrolase-L1 in cynomolgus monkey placentas.</title>
        <authorList>
            <person name="Sekiguchi S."/>
            <person name="Takatori A."/>
            <person name="Negishi T."/>
            <person name="Kwon J."/>
            <person name="Kokubo T."/>
            <person name="Ishii Y."/>
            <person name="Kyuwa S."/>
            <person name="Yoshikawa Y."/>
        </authorList>
    </citation>
    <scope>TISSUE SPECIFICITY</scope>
    <scope>SUBCELLULAR LOCATION</scope>
</reference>
<sequence>MQLKPMEINPEMLNKVLSRLGVAGQWRFVDVLGLEEDSLGSVPAPACALLLLFPLTAQHENFRKKQIEELKGQEVSPKVYFMKQTIGNSCGTIGLIHAVANNQDKLGFEDGSVLKQFLSETEKMSPEDRAKCFEKNEAIQAAHDAVAQEGQCRVDDKVNFHFILFNNVDGHLYELDGRMPFPVNHGASSEGTLLQDAAKVCREFTEREQGEVRFSAVALCKAA</sequence>
<proteinExistence type="evidence at transcript level"/>
<name>UCHL1_MACFA</name>